<organism>
    <name type="scientific">Mesoplasma florum (strain ATCC 33453 / NBRC 100688 / NCTC 11704 / L1)</name>
    <name type="common">Acholeplasma florum</name>
    <dbReference type="NCBI Taxonomy" id="265311"/>
    <lineage>
        <taxon>Bacteria</taxon>
        <taxon>Bacillati</taxon>
        <taxon>Mycoplasmatota</taxon>
        <taxon>Mollicutes</taxon>
        <taxon>Entomoplasmatales</taxon>
        <taxon>Entomoplasmataceae</taxon>
        <taxon>Mesoplasma</taxon>
    </lineage>
</organism>
<comment type="function">
    <text evidence="1">ATP-binding (A) component of a common energy-coupling factor (ECF) ABC-transporter complex. Unlike classic ABC transporters this ECF transporter provides the energy necessary to transport a number of different substrates.</text>
</comment>
<comment type="subunit">
    <text evidence="1">Forms a stable energy-coupling factor (ECF) transporter complex composed of 2 membrane-embedded substrate-binding proteins (S component), 2 ATP-binding proteins (A component) and 2 transmembrane proteins (T component).</text>
</comment>
<comment type="subcellular location">
    <subcellularLocation>
        <location evidence="1">Cell membrane</location>
        <topology evidence="1">Peripheral membrane protein</topology>
    </subcellularLocation>
</comment>
<comment type="similarity">
    <text evidence="1">Belongs to the ABC transporter superfamily. Energy-coupling factor EcfA family.</text>
</comment>
<accession>Q6F1W4</accession>
<feature type="chain" id="PRO_0000092035" description="Energy-coupling factor transporter ATP-binding protein EcfA2">
    <location>
        <begin position="1"/>
        <end position="315"/>
    </location>
</feature>
<feature type="domain" description="ABC transporter" evidence="1">
    <location>
        <begin position="31"/>
        <end position="275"/>
    </location>
</feature>
<feature type="binding site" evidence="1">
    <location>
        <begin position="68"/>
        <end position="75"/>
    </location>
    <ligand>
        <name>ATP</name>
        <dbReference type="ChEBI" id="CHEBI:30616"/>
    </ligand>
</feature>
<proteinExistence type="inferred from homology"/>
<sequence length="315" mass="35738">MQINKKEIKQNLKKWNEEKKSIKSFSFTGDIILDNVSYTYSKKTPFEFRALDNADLTISDKKITCVIGTTGSGKSTMIQLTNGLLISETGQTIVGDYKIPAGLKKIKEVKDLRREVGLVFQFPEYQLFQDTIEKDIAFGPIHLGADKEEVYKKIPELLDLVSLPREYAKRSPFELSGGQKRRTAIAGIIAMDGKTLVLDEPTGGLDPKGEEDFMNLFLRLNKNQGKRIIMVTHNMDQVLKVADEVIVMHEGKVISKGSPFEIFSNQELLSKIQIEPPKLYKLMYKLKEKGTDLLNKNIRTIDEFAKAFKEVRKGK</sequence>
<gene>
    <name evidence="1" type="primary">ecfA2</name>
    <name type="synonym">cbiO2</name>
    <name type="ordered locus">Mfl153</name>
</gene>
<keyword id="KW-0067">ATP-binding</keyword>
<keyword id="KW-1003">Cell membrane</keyword>
<keyword id="KW-0472">Membrane</keyword>
<keyword id="KW-0547">Nucleotide-binding</keyword>
<keyword id="KW-1185">Reference proteome</keyword>
<keyword id="KW-1278">Translocase</keyword>
<keyword id="KW-0813">Transport</keyword>
<dbReference type="EC" id="7.-.-.-" evidence="1"/>
<dbReference type="EMBL" id="AE017263">
    <property type="protein sequence ID" value="AAT75509.1"/>
    <property type="molecule type" value="Genomic_DNA"/>
</dbReference>
<dbReference type="RefSeq" id="WP_011183050.1">
    <property type="nucleotide sequence ID" value="NC_006055.1"/>
</dbReference>
<dbReference type="RefSeq" id="YP_053393.1">
    <property type="nucleotide sequence ID" value="NC_006055.1"/>
</dbReference>
<dbReference type="SMR" id="Q6F1W4"/>
<dbReference type="STRING" id="265311.Mfl153"/>
<dbReference type="PaxDb" id="265311-Mfl153"/>
<dbReference type="EnsemblBacteria" id="AAT75509">
    <property type="protein sequence ID" value="AAT75509"/>
    <property type="gene ID" value="Mfl153"/>
</dbReference>
<dbReference type="GeneID" id="2897981"/>
<dbReference type="KEGG" id="mfl:Mfl153"/>
<dbReference type="PATRIC" id="fig|265311.5.peg.154"/>
<dbReference type="eggNOG" id="COG1122">
    <property type="taxonomic scope" value="Bacteria"/>
</dbReference>
<dbReference type="HOGENOM" id="CLU_000604_1_22_14"/>
<dbReference type="OrthoDB" id="9784332at2"/>
<dbReference type="Proteomes" id="UP000006647">
    <property type="component" value="Chromosome"/>
</dbReference>
<dbReference type="GO" id="GO:0043190">
    <property type="term" value="C:ATP-binding cassette (ABC) transporter complex"/>
    <property type="evidence" value="ECO:0007669"/>
    <property type="project" value="TreeGrafter"/>
</dbReference>
<dbReference type="GO" id="GO:0005524">
    <property type="term" value="F:ATP binding"/>
    <property type="evidence" value="ECO:0007669"/>
    <property type="project" value="UniProtKB-KW"/>
</dbReference>
<dbReference type="GO" id="GO:0016887">
    <property type="term" value="F:ATP hydrolysis activity"/>
    <property type="evidence" value="ECO:0007669"/>
    <property type="project" value="InterPro"/>
</dbReference>
<dbReference type="GO" id="GO:0042626">
    <property type="term" value="F:ATPase-coupled transmembrane transporter activity"/>
    <property type="evidence" value="ECO:0007669"/>
    <property type="project" value="TreeGrafter"/>
</dbReference>
<dbReference type="CDD" id="cd03225">
    <property type="entry name" value="ABC_cobalt_CbiO_domain1"/>
    <property type="match status" value="1"/>
</dbReference>
<dbReference type="FunFam" id="3.40.50.300:FF:000224">
    <property type="entry name" value="Energy-coupling factor transporter ATP-binding protein EcfA"/>
    <property type="match status" value="1"/>
</dbReference>
<dbReference type="Gene3D" id="3.40.50.300">
    <property type="entry name" value="P-loop containing nucleotide triphosphate hydrolases"/>
    <property type="match status" value="1"/>
</dbReference>
<dbReference type="InterPro" id="IPR003593">
    <property type="entry name" value="AAA+_ATPase"/>
</dbReference>
<dbReference type="InterPro" id="IPR003439">
    <property type="entry name" value="ABC_transporter-like_ATP-bd"/>
</dbReference>
<dbReference type="InterPro" id="IPR015856">
    <property type="entry name" value="ABC_transpr_CbiO/EcfA_su"/>
</dbReference>
<dbReference type="InterPro" id="IPR050095">
    <property type="entry name" value="ECF_ABC_transporter_ATP-bd"/>
</dbReference>
<dbReference type="InterPro" id="IPR030946">
    <property type="entry name" value="EcfA2"/>
</dbReference>
<dbReference type="InterPro" id="IPR027417">
    <property type="entry name" value="P-loop_NTPase"/>
</dbReference>
<dbReference type="NCBIfam" id="TIGR04521">
    <property type="entry name" value="ECF_ATPase_2"/>
    <property type="match status" value="1"/>
</dbReference>
<dbReference type="PANTHER" id="PTHR43553:SF27">
    <property type="entry name" value="ENERGY-COUPLING FACTOR TRANSPORTER ATP-BINDING PROTEIN ECFA2"/>
    <property type="match status" value="1"/>
</dbReference>
<dbReference type="PANTHER" id="PTHR43553">
    <property type="entry name" value="HEAVY METAL TRANSPORTER"/>
    <property type="match status" value="1"/>
</dbReference>
<dbReference type="Pfam" id="PF00005">
    <property type="entry name" value="ABC_tran"/>
    <property type="match status" value="1"/>
</dbReference>
<dbReference type="SMART" id="SM00382">
    <property type="entry name" value="AAA"/>
    <property type="match status" value="1"/>
</dbReference>
<dbReference type="SUPFAM" id="SSF52540">
    <property type="entry name" value="P-loop containing nucleoside triphosphate hydrolases"/>
    <property type="match status" value="1"/>
</dbReference>
<dbReference type="PROSITE" id="PS50893">
    <property type="entry name" value="ABC_TRANSPORTER_2"/>
    <property type="match status" value="1"/>
</dbReference>
<dbReference type="PROSITE" id="PS51246">
    <property type="entry name" value="CBIO"/>
    <property type="match status" value="1"/>
</dbReference>
<protein>
    <recommendedName>
        <fullName evidence="1">Energy-coupling factor transporter ATP-binding protein EcfA2</fullName>
        <shortName evidence="1">ECF transporter A component EcfA2</shortName>
        <ecNumber evidence="1">7.-.-.-</ecNumber>
    </recommendedName>
</protein>
<evidence type="ECO:0000255" key="1">
    <source>
        <dbReference type="HAMAP-Rule" id="MF_01710"/>
    </source>
</evidence>
<name>ECFA2_MESFL</name>
<reference key="1">
    <citation type="submission" date="2004-06" db="EMBL/GenBank/DDBJ databases">
        <authorList>
            <person name="Birren B.W."/>
            <person name="Stange-Thomann N."/>
            <person name="Hafez N."/>
            <person name="DeCaprio D."/>
            <person name="Fisher S."/>
            <person name="Butler J."/>
            <person name="Elkins T."/>
            <person name="Kodira C.D."/>
            <person name="Major J."/>
            <person name="Wang S."/>
            <person name="Nicol R."/>
            <person name="Nusbaum C."/>
        </authorList>
    </citation>
    <scope>NUCLEOTIDE SEQUENCE [LARGE SCALE GENOMIC DNA]</scope>
    <source>
        <strain>ATCC 33453 / NBRC 100688 / NCTC 11704 / L1</strain>
    </source>
</reference>